<protein>
    <recommendedName>
        <fullName>Thioredoxin reductase</fullName>
        <shortName>TRXR</shortName>
        <ecNumber>1.8.1.9</ecNumber>
    </recommendedName>
</protein>
<reference key="1">
    <citation type="journal article" date="2002" name="Lancet">
        <title>Genome and virulence determinants of high virulence community-acquired MRSA.</title>
        <authorList>
            <person name="Baba T."/>
            <person name="Takeuchi F."/>
            <person name="Kuroda M."/>
            <person name="Yuzawa H."/>
            <person name="Aoki K."/>
            <person name="Oguchi A."/>
            <person name="Nagai Y."/>
            <person name="Iwama N."/>
            <person name="Asano K."/>
            <person name="Naimi T."/>
            <person name="Kuroda H."/>
            <person name="Cui L."/>
            <person name="Yamamoto K."/>
            <person name="Hiramatsu K."/>
        </authorList>
    </citation>
    <scope>NUCLEOTIDE SEQUENCE [LARGE SCALE GENOMIC DNA]</scope>
    <source>
        <strain>MW2</strain>
    </source>
</reference>
<sequence length="311" mass="33616">MTEIDFDIAIIGAGPAGMTAAVYASRANLKTVMIERGIPGGQMANTEEVENFPGFEMITGPDLSTKMFEHAKKFGAVYQYGDIKSVEDKGEYKVINFGNKELTAKAVIIATGAEYKKIGVPGEQELGGRGVSYCAVCDGAFFKNKRLFVIGGGDSAVEEGTFLTKFADKVTIVHRRDELRAQRILQDRAFKNDKIDFIWSHTLKSINEKDGKVGSVTLTSTKDGSEETHEADGVFIYIGMKPLTAPFKDLGITNDVGYIVTKDDMTTSVPGIFAAGDVRDKGLRQIVTATGDGSIAAQSAAEYIEHLNDQA</sequence>
<gene>
    <name type="primary">trxB</name>
    <name type="ordered locus">MW0726</name>
</gene>
<dbReference type="EC" id="1.8.1.9"/>
<dbReference type="EMBL" id="BA000033">
    <property type="protein sequence ID" value="BAB94591.1"/>
    <property type="molecule type" value="Genomic_DNA"/>
</dbReference>
<dbReference type="RefSeq" id="WP_000134963.1">
    <property type="nucleotide sequence ID" value="NC_003923.1"/>
</dbReference>
<dbReference type="PDB" id="4GCM">
    <property type="method" value="X-ray"/>
    <property type="resolution" value="1.80 A"/>
    <property type="chains" value="A/B=1-311"/>
</dbReference>
<dbReference type="PDBsum" id="4GCM"/>
<dbReference type="SMR" id="P66011"/>
<dbReference type="KEGG" id="sam:MW0726"/>
<dbReference type="HOGENOM" id="CLU_031864_5_1_9"/>
<dbReference type="EvolutionaryTrace" id="P66011"/>
<dbReference type="GO" id="GO:0005737">
    <property type="term" value="C:cytoplasm"/>
    <property type="evidence" value="ECO:0007669"/>
    <property type="project" value="UniProtKB-SubCell"/>
</dbReference>
<dbReference type="GO" id="GO:0004791">
    <property type="term" value="F:thioredoxin-disulfide reductase (NADPH) activity"/>
    <property type="evidence" value="ECO:0007669"/>
    <property type="project" value="UniProtKB-EC"/>
</dbReference>
<dbReference type="GO" id="GO:0019430">
    <property type="term" value="P:removal of superoxide radicals"/>
    <property type="evidence" value="ECO:0007669"/>
    <property type="project" value="InterPro"/>
</dbReference>
<dbReference type="Gene3D" id="3.50.50.60">
    <property type="entry name" value="FAD/NAD(P)-binding domain"/>
    <property type="match status" value="2"/>
</dbReference>
<dbReference type="InterPro" id="IPR036188">
    <property type="entry name" value="FAD/NAD-bd_sf"/>
</dbReference>
<dbReference type="InterPro" id="IPR023753">
    <property type="entry name" value="FAD/NAD-binding_dom"/>
</dbReference>
<dbReference type="InterPro" id="IPR050097">
    <property type="entry name" value="Ferredoxin-NADP_redctase_2"/>
</dbReference>
<dbReference type="InterPro" id="IPR008255">
    <property type="entry name" value="Pyr_nucl-diS_OxRdtase_2_AS"/>
</dbReference>
<dbReference type="InterPro" id="IPR005982">
    <property type="entry name" value="Thioredox_Rdtase"/>
</dbReference>
<dbReference type="NCBIfam" id="TIGR01292">
    <property type="entry name" value="TRX_reduct"/>
    <property type="match status" value="1"/>
</dbReference>
<dbReference type="PANTHER" id="PTHR48105">
    <property type="entry name" value="THIOREDOXIN REDUCTASE 1-RELATED-RELATED"/>
    <property type="match status" value="1"/>
</dbReference>
<dbReference type="Pfam" id="PF07992">
    <property type="entry name" value="Pyr_redox_2"/>
    <property type="match status" value="1"/>
</dbReference>
<dbReference type="PRINTS" id="PR00368">
    <property type="entry name" value="FADPNR"/>
</dbReference>
<dbReference type="PRINTS" id="PR00469">
    <property type="entry name" value="PNDRDTASEII"/>
</dbReference>
<dbReference type="SUPFAM" id="SSF51905">
    <property type="entry name" value="FAD/NAD(P)-binding domain"/>
    <property type="match status" value="1"/>
</dbReference>
<dbReference type="PROSITE" id="PS00573">
    <property type="entry name" value="PYRIDINE_REDOX_2"/>
    <property type="match status" value="1"/>
</dbReference>
<accession>P66011</accession>
<accession>Q99VL2</accession>
<name>TRXB_STAAW</name>
<evidence type="ECO:0000250" key="1"/>
<evidence type="ECO:0000250" key="2">
    <source>
        <dbReference type="UniProtKB" id="P0A9P4"/>
    </source>
</evidence>
<evidence type="ECO:0000305" key="3"/>
<evidence type="ECO:0007829" key="4">
    <source>
        <dbReference type="PDB" id="4GCM"/>
    </source>
</evidence>
<proteinExistence type="evidence at protein level"/>
<keyword id="KW-0002">3D-structure</keyword>
<keyword id="KW-0963">Cytoplasm</keyword>
<keyword id="KW-1015">Disulfide bond</keyword>
<keyword id="KW-0274">FAD</keyword>
<keyword id="KW-0285">Flavoprotein</keyword>
<keyword id="KW-0521">NADP</keyword>
<keyword id="KW-0560">Oxidoreductase</keyword>
<keyword id="KW-0676">Redox-active center</keyword>
<comment type="catalytic activity">
    <reaction>
        <text>[thioredoxin]-dithiol + NADP(+) = [thioredoxin]-disulfide + NADPH + H(+)</text>
        <dbReference type="Rhea" id="RHEA:20345"/>
        <dbReference type="Rhea" id="RHEA-COMP:10698"/>
        <dbReference type="Rhea" id="RHEA-COMP:10700"/>
        <dbReference type="ChEBI" id="CHEBI:15378"/>
        <dbReference type="ChEBI" id="CHEBI:29950"/>
        <dbReference type="ChEBI" id="CHEBI:50058"/>
        <dbReference type="ChEBI" id="CHEBI:57783"/>
        <dbReference type="ChEBI" id="CHEBI:58349"/>
        <dbReference type="EC" id="1.8.1.9"/>
    </reaction>
</comment>
<comment type="cofactor">
    <cofactor evidence="2">
        <name>FAD</name>
        <dbReference type="ChEBI" id="CHEBI:57692"/>
    </cofactor>
    <text evidence="2">Binds 1 FAD per subunit.</text>
</comment>
<comment type="subunit">
    <text evidence="2">Homodimer.</text>
</comment>
<comment type="subcellular location">
    <subcellularLocation>
        <location evidence="1">Cytoplasm</location>
    </subcellularLocation>
</comment>
<comment type="miscellaneous">
    <text>The active site is a redox-active disulfide bond.</text>
</comment>
<comment type="similarity">
    <text evidence="3">Belongs to the class-II pyridine nucleotide-disulfide oxidoreductase family.</text>
</comment>
<feature type="chain" id="PRO_0000166749" description="Thioredoxin reductase">
    <location>
        <begin position="1"/>
        <end position="311"/>
    </location>
</feature>
<feature type="binding site" evidence="2">
    <location>
        <begin position="35"/>
        <end position="42"/>
    </location>
    <ligand>
        <name>FAD</name>
        <dbReference type="ChEBI" id="CHEBI:57692"/>
    </ligand>
</feature>
<feature type="binding site" evidence="2">
    <location>
        <begin position="277"/>
        <end position="286"/>
    </location>
    <ligand>
        <name>FAD</name>
        <dbReference type="ChEBI" id="CHEBI:57692"/>
    </ligand>
</feature>
<feature type="disulfide bond" description="Redox-active" evidence="2">
    <location>
        <begin position="134"/>
        <end position="137"/>
    </location>
</feature>
<feature type="strand" evidence="4">
    <location>
        <begin position="5"/>
        <end position="11"/>
    </location>
</feature>
<feature type="helix" evidence="4">
    <location>
        <begin position="15"/>
        <end position="26"/>
    </location>
</feature>
<feature type="strand" evidence="4">
    <location>
        <begin position="31"/>
        <end position="37"/>
    </location>
</feature>
<feature type="helix" evidence="4">
    <location>
        <begin position="41"/>
        <end position="45"/>
    </location>
</feature>
<feature type="strand" evidence="4">
    <location>
        <begin position="56"/>
        <end position="58"/>
    </location>
</feature>
<feature type="helix" evidence="4">
    <location>
        <begin position="60"/>
        <end position="73"/>
    </location>
</feature>
<feature type="strand" evidence="4">
    <location>
        <begin position="77"/>
        <end position="80"/>
    </location>
</feature>
<feature type="strand" evidence="4">
    <location>
        <begin position="85"/>
        <end position="88"/>
    </location>
</feature>
<feature type="strand" evidence="4">
    <location>
        <begin position="93"/>
        <end position="96"/>
    </location>
</feature>
<feature type="strand" evidence="4">
    <location>
        <begin position="101"/>
        <end position="109"/>
    </location>
</feature>
<feature type="strand" evidence="4">
    <location>
        <begin position="113"/>
        <end position="115"/>
    </location>
</feature>
<feature type="turn" evidence="4">
    <location>
        <begin position="121"/>
        <end position="126"/>
    </location>
</feature>
<feature type="turn" evidence="4">
    <location>
        <begin position="128"/>
        <end position="130"/>
    </location>
</feature>
<feature type="strand" evidence="4">
    <location>
        <begin position="131"/>
        <end position="133"/>
    </location>
</feature>
<feature type="helix" evidence="4">
    <location>
        <begin position="135"/>
        <end position="138"/>
    </location>
</feature>
<feature type="helix" evidence="4">
    <location>
        <begin position="139"/>
        <end position="142"/>
    </location>
</feature>
<feature type="strand" evidence="4">
    <location>
        <begin position="146"/>
        <end position="150"/>
    </location>
</feature>
<feature type="helix" evidence="4">
    <location>
        <begin position="154"/>
        <end position="163"/>
    </location>
</feature>
<feature type="turn" evidence="4">
    <location>
        <begin position="164"/>
        <end position="166"/>
    </location>
</feature>
<feature type="strand" evidence="4">
    <location>
        <begin position="168"/>
        <end position="173"/>
    </location>
</feature>
<feature type="strand" evidence="4">
    <location>
        <begin position="175"/>
        <end position="178"/>
    </location>
</feature>
<feature type="helix" evidence="4">
    <location>
        <begin position="183"/>
        <end position="191"/>
    </location>
</feature>
<feature type="strand" evidence="4">
    <location>
        <begin position="195"/>
        <end position="198"/>
    </location>
</feature>
<feature type="strand" evidence="4">
    <location>
        <begin position="200"/>
        <end position="209"/>
    </location>
</feature>
<feature type="strand" evidence="4">
    <location>
        <begin position="212"/>
        <end position="220"/>
    </location>
</feature>
<feature type="turn" evidence="4">
    <location>
        <begin position="221"/>
        <end position="223"/>
    </location>
</feature>
<feature type="strand" evidence="4">
    <location>
        <begin position="226"/>
        <end position="230"/>
    </location>
</feature>
<feature type="strand" evidence="4">
    <location>
        <begin position="232"/>
        <end position="236"/>
    </location>
</feature>
<feature type="strand" evidence="4">
    <location>
        <begin position="240"/>
        <end position="243"/>
    </location>
</feature>
<feature type="helix" evidence="4">
    <location>
        <begin position="245"/>
        <end position="250"/>
    </location>
</feature>
<feature type="strand" evidence="4">
    <location>
        <begin position="272"/>
        <end position="274"/>
    </location>
</feature>
<feature type="helix" evidence="4">
    <location>
        <begin position="286"/>
        <end position="309"/>
    </location>
</feature>
<organism>
    <name type="scientific">Staphylococcus aureus (strain MW2)</name>
    <dbReference type="NCBI Taxonomy" id="196620"/>
    <lineage>
        <taxon>Bacteria</taxon>
        <taxon>Bacillati</taxon>
        <taxon>Bacillota</taxon>
        <taxon>Bacilli</taxon>
        <taxon>Bacillales</taxon>
        <taxon>Staphylococcaceae</taxon>
        <taxon>Staphylococcus</taxon>
    </lineage>
</organism>